<dbReference type="EC" id="3.1.3.16"/>
<dbReference type="EMBL" id="Z93770">
    <property type="protein sequence ID" value="CAB07805.1"/>
    <property type="molecule type" value="mRNA"/>
</dbReference>
<dbReference type="PIR" id="T03597">
    <property type="entry name" value="T03597"/>
</dbReference>
<dbReference type="RefSeq" id="NP_001312637.1">
    <property type="nucleotide sequence ID" value="NM_001325708.1"/>
</dbReference>
<dbReference type="SMR" id="O04858"/>
<dbReference type="STRING" id="4097.O04858"/>
<dbReference type="PaxDb" id="4097-O04858"/>
<dbReference type="GeneID" id="107801901"/>
<dbReference type="KEGG" id="nta:107801901"/>
<dbReference type="OrthoDB" id="1930084at2759"/>
<dbReference type="Proteomes" id="UP000084051">
    <property type="component" value="Unplaced"/>
</dbReference>
<dbReference type="GO" id="GO:0005737">
    <property type="term" value="C:cytoplasm"/>
    <property type="evidence" value="ECO:0000318"/>
    <property type="project" value="GO_Central"/>
</dbReference>
<dbReference type="GO" id="GO:0005634">
    <property type="term" value="C:nucleus"/>
    <property type="evidence" value="ECO:0000318"/>
    <property type="project" value="GO_Central"/>
</dbReference>
<dbReference type="GO" id="GO:0046872">
    <property type="term" value="F:metal ion binding"/>
    <property type="evidence" value="ECO:0007669"/>
    <property type="project" value="UniProtKB-KW"/>
</dbReference>
<dbReference type="GO" id="GO:0004722">
    <property type="term" value="F:protein serine/threonine phosphatase activity"/>
    <property type="evidence" value="ECO:0000318"/>
    <property type="project" value="GO_Central"/>
</dbReference>
<dbReference type="CDD" id="cd07414">
    <property type="entry name" value="MPP_PP1_PPKL"/>
    <property type="match status" value="1"/>
</dbReference>
<dbReference type="FunFam" id="3.60.21.10:FF:000212">
    <property type="entry name" value="Serine/threonine-protein phosphatase"/>
    <property type="match status" value="1"/>
</dbReference>
<dbReference type="Gene3D" id="3.60.21.10">
    <property type="match status" value="1"/>
</dbReference>
<dbReference type="InterPro" id="IPR004843">
    <property type="entry name" value="Calcineurin-like_PHP_ApaH"/>
</dbReference>
<dbReference type="InterPro" id="IPR029052">
    <property type="entry name" value="Metallo-depent_PP-like"/>
</dbReference>
<dbReference type="InterPro" id="IPR050341">
    <property type="entry name" value="PP1_catalytic_subunit"/>
</dbReference>
<dbReference type="InterPro" id="IPR006186">
    <property type="entry name" value="Ser/Thr-sp_prot-phosphatase"/>
</dbReference>
<dbReference type="InterPro" id="IPR031675">
    <property type="entry name" value="STPPase_N"/>
</dbReference>
<dbReference type="PANTHER" id="PTHR11668">
    <property type="entry name" value="SERINE/THREONINE PROTEIN PHOSPHATASE"/>
    <property type="match status" value="1"/>
</dbReference>
<dbReference type="PANTHER" id="PTHR11668:SF490">
    <property type="entry name" value="SERINE_THREONINE-PROTEIN PHOSPHATASE PP1 ISOZYME 4"/>
    <property type="match status" value="1"/>
</dbReference>
<dbReference type="Pfam" id="PF00149">
    <property type="entry name" value="Metallophos"/>
    <property type="match status" value="1"/>
</dbReference>
<dbReference type="Pfam" id="PF16891">
    <property type="entry name" value="STPPase_N"/>
    <property type="match status" value="1"/>
</dbReference>
<dbReference type="PRINTS" id="PR00114">
    <property type="entry name" value="STPHPHTASE"/>
</dbReference>
<dbReference type="SMART" id="SM00156">
    <property type="entry name" value="PP2Ac"/>
    <property type="match status" value="1"/>
</dbReference>
<dbReference type="SUPFAM" id="SSF56300">
    <property type="entry name" value="Metallo-dependent phosphatases"/>
    <property type="match status" value="1"/>
</dbReference>
<dbReference type="PROSITE" id="PS00125">
    <property type="entry name" value="SER_THR_PHOSPHATASE"/>
    <property type="match status" value="1"/>
</dbReference>
<comment type="catalytic activity">
    <reaction>
        <text>O-phospho-L-seryl-[protein] + H2O = L-seryl-[protein] + phosphate</text>
        <dbReference type="Rhea" id="RHEA:20629"/>
        <dbReference type="Rhea" id="RHEA-COMP:9863"/>
        <dbReference type="Rhea" id="RHEA-COMP:11604"/>
        <dbReference type="ChEBI" id="CHEBI:15377"/>
        <dbReference type="ChEBI" id="CHEBI:29999"/>
        <dbReference type="ChEBI" id="CHEBI:43474"/>
        <dbReference type="ChEBI" id="CHEBI:83421"/>
        <dbReference type="EC" id="3.1.3.16"/>
    </reaction>
</comment>
<comment type="catalytic activity">
    <reaction>
        <text>O-phospho-L-threonyl-[protein] + H2O = L-threonyl-[protein] + phosphate</text>
        <dbReference type="Rhea" id="RHEA:47004"/>
        <dbReference type="Rhea" id="RHEA-COMP:11060"/>
        <dbReference type="Rhea" id="RHEA-COMP:11605"/>
        <dbReference type="ChEBI" id="CHEBI:15377"/>
        <dbReference type="ChEBI" id="CHEBI:30013"/>
        <dbReference type="ChEBI" id="CHEBI:43474"/>
        <dbReference type="ChEBI" id="CHEBI:61977"/>
        <dbReference type="EC" id="3.1.3.16"/>
    </reaction>
</comment>
<comment type="cofactor">
    <cofactor evidence="1">
        <name>Mn(2+)</name>
        <dbReference type="ChEBI" id="CHEBI:29035"/>
    </cofactor>
    <text evidence="1">Binds 2 manganese ions per subunit.</text>
</comment>
<comment type="similarity">
    <text evidence="2">Belongs to the PPP phosphatase family. PP-1 subfamily.</text>
</comment>
<accession>O04858</accession>
<name>PP13_TOBAC</name>
<sequence>MDTAAVDRIIEKLIEVRSSNPGKLVQLSESEIKQLCVASRDIFLKQPNLLESEAPIKTRGDIHGQYSDLLRLFEYGGFPPEANYLFLGDYVDRGRQSLETICLLLAYKIKYPENFFLLRGNHECASINRIYGFYDECKRRFNVKLWKSFTDCFNCLPVAALIDEKILCMHGGLSPDLSSLDQIRNLPRPTAIPDTGLLCDLQRSDPGKDVKGWGMNDRGVSYTFGPDKVSEFLSKHDLDLVCRAHQVVEDGYEFFAESELVTIFSAPNYCGEFDNAGAMMSVDENLLCSFQILKPAEKKNKFVM</sequence>
<protein>
    <recommendedName>
        <fullName>Serine/threonine-protein phosphatase PP1 isozyme 3</fullName>
        <ecNumber>3.1.3.16</ecNumber>
    </recommendedName>
</protein>
<gene>
    <name type="primary">NPP3</name>
</gene>
<proteinExistence type="evidence at transcript level"/>
<organism>
    <name type="scientific">Nicotiana tabacum</name>
    <name type="common">Common tobacco</name>
    <dbReference type="NCBI Taxonomy" id="4097"/>
    <lineage>
        <taxon>Eukaryota</taxon>
        <taxon>Viridiplantae</taxon>
        <taxon>Streptophyta</taxon>
        <taxon>Embryophyta</taxon>
        <taxon>Tracheophyta</taxon>
        <taxon>Spermatophyta</taxon>
        <taxon>Magnoliopsida</taxon>
        <taxon>eudicotyledons</taxon>
        <taxon>Gunneridae</taxon>
        <taxon>Pentapetalae</taxon>
        <taxon>asterids</taxon>
        <taxon>lamiids</taxon>
        <taxon>Solanales</taxon>
        <taxon>Solanaceae</taxon>
        <taxon>Nicotianoideae</taxon>
        <taxon>Nicotianeae</taxon>
        <taxon>Nicotiana</taxon>
    </lineage>
</organism>
<evidence type="ECO:0000250" key="1"/>
<evidence type="ECO:0000305" key="2"/>
<reference key="1">
    <citation type="journal article" date="1998" name="Plant Mol. Biol.">
        <title>Multiple genes encoding serine/threonine protein phosphatases and their differential expression in Nicotiana tabacum.</title>
        <authorList>
            <person name="Suh M."/>
            <person name="Cho H."/>
            <person name="Kim Y."/>
            <person name="Liu J."/>
            <person name="Lee H."/>
        </authorList>
    </citation>
    <scope>NUCLEOTIDE SEQUENCE [MRNA]</scope>
    <source>
        <strain>cv. Xanthi</strain>
    </source>
</reference>
<keyword id="KW-0378">Hydrolase</keyword>
<keyword id="KW-0464">Manganese</keyword>
<keyword id="KW-0479">Metal-binding</keyword>
<keyword id="KW-0904">Protein phosphatase</keyword>
<keyword id="KW-1185">Reference proteome</keyword>
<feature type="chain" id="PRO_0000058813" description="Serine/threonine-protein phosphatase PP1 isozyme 3">
    <location>
        <begin position="1"/>
        <end position="304"/>
    </location>
</feature>
<feature type="active site" description="Proton donor" evidence="1">
    <location>
        <position position="122"/>
    </location>
</feature>
<feature type="binding site" evidence="1">
    <location>
        <position position="61"/>
    </location>
    <ligand>
        <name>Mn(2+)</name>
        <dbReference type="ChEBI" id="CHEBI:29035"/>
        <label>1</label>
    </ligand>
</feature>
<feature type="binding site" evidence="1">
    <location>
        <position position="63"/>
    </location>
    <ligand>
        <name>Mn(2+)</name>
        <dbReference type="ChEBI" id="CHEBI:29035"/>
        <label>1</label>
    </ligand>
</feature>
<feature type="binding site" evidence="1">
    <location>
        <position position="89"/>
    </location>
    <ligand>
        <name>Mn(2+)</name>
        <dbReference type="ChEBI" id="CHEBI:29035"/>
        <label>1</label>
    </ligand>
</feature>
<feature type="binding site" evidence="1">
    <location>
        <position position="89"/>
    </location>
    <ligand>
        <name>Mn(2+)</name>
        <dbReference type="ChEBI" id="CHEBI:29035"/>
        <label>2</label>
    </ligand>
</feature>
<feature type="binding site" evidence="1">
    <location>
        <position position="121"/>
    </location>
    <ligand>
        <name>Mn(2+)</name>
        <dbReference type="ChEBI" id="CHEBI:29035"/>
        <label>2</label>
    </ligand>
</feature>
<feature type="binding site" evidence="1">
    <location>
        <position position="170"/>
    </location>
    <ligand>
        <name>Mn(2+)</name>
        <dbReference type="ChEBI" id="CHEBI:29035"/>
        <label>2</label>
    </ligand>
</feature>
<feature type="binding site" evidence="1">
    <location>
        <position position="245"/>
    </location>
    <ligand>
        <name>Mn(2+)</name>
        <dbReference type="ChEBI" id="CHEBI:29035"/>
        <label>2</label>
    </ligand>
</feature>